<protein>
    <recommendedName>
        <fullName>Tryptophan biosynthesis protein TrpCF</fullName>
    </recommendedName>
    <domain>
        <recommendedName>
            <fullName>Indole-3-glycerol phosphate synthase</fullName>
            <shortName>IGPS</shortName>
            <ecNumber>4.1.1.48</ecNumber>
        </recommendedName>
    </domain>
    <domain>
        <recommendedName>
            <fullName>N-(5'-phospho-ribosyl)anthranilate isomerase</fullName>
            <shortName>PRAI</shortName>
            <ecNumber>5.3.1.24</ecNumber>
        </recommendedName>
    </domain>
</protein>
<accession>Q8X7B7</accession>
<comment type="function">
    <text evidence="1">Bifunctional enzyme that catalyzes two sequential steps of tryptophan biosynthetic pathway. The first reaction is catalyzed by the isomerase, coded by the TrpF domain; the second reaction is catalyzed by the synthase, coded by the TrpC domain (By similarity).</text>
</comment>
<comment type="catalytic activity">
    <reaction>
        <text>N-(5-phospho-beta-D-ribosyl)anthranilate = 1-(2-carboxyphenylamino)-1-deoxy-D-ribulose 5-phosphate</text>
        <dbReference type="Rhea" id="RHEA:21540"/>
        <dbReference type="ChEBI" id="CHEBI:18277"/>
        <dbReference type="ChEBI" id="CHEBI:58613"/>
        <dbReference type="EC" id="5.3.1.24"/>
    </reaction>
</comment>
<comment type="catalytic activity">
    <reaction>
        <text>1-(2-carboxyphenylamino)-1-deoxy-D-ribulose 5-phosphate + H(+) = (1S,2R)-1-C-(indol-3-yl)glycerol 3-phosphate + CO2 + H2O</text>
        <dbReference type="Rhea" id="RHEA:23476"/>
        <dbReference type="ChEBI" id="CHEBI:15377"/>
        <dbReference type="ChEBI" id="CHEBI:15378"/>
        <dbReference type="ChEBI" id="CHEBI:16526"/>
        <dbReference type="ChEBI" id="CHEBI:58613"/>
        <dbReference type="ChEBI" id="CHEBI:58866"/>
        <dbReference type="EC" id="4.1.1.48"/>
    </reaction>
</comment>
<comment type="pathway">
    <text>Amino-acid biosynthesis; L-tryptophan biosynthesis; L-tryptophan from chorismate: step 3/5.</text>
</comment>
<comment type="pathway">
    <text>Amino-acid biosynthesis; L-tryptophan biosynthesis; L-tryptophan from chorismate: step 4/5.</text>
</comment>
<comment type="subunit">
    <text evidence="1">Monomer.</text>
</comment>
<comment type="similarity">
    <text evidence="2">In the N-terminal section; belongs to the TrpC family.</text>
</comment>
<comment type="similarity">
    <text evidence="2">In the C-terminal section; belongs to the TrpF family.</text>
</comment>
<comment type="sequence caution" evidence="2">
    <conflict type="erroneous initiation">
        <sequence resource="EMBL-CDS" id="BAB35257"/>
    </conflict>
    <text>Extended N-terminus.</text>
</comment>
<name>TRPC_ECO57</name>
<sequence length="453" mass="49433">MMQTVLAKIVADKAIWVEARKQQQPLASFQNEVQPSTRHFYDALQGARTAFILECKKASPSKGVICDDFDPARIAAIYKHYASAISVLTDEKYFQGSFDFLPIVSQIAPQPILCKDFIIDPYQIYLARYYQADACLLMLSVLDDEQYRQLAAVAHSLKMGVLTEVSNEEELERAIALGAKVVGINNRDLRDLSIDLNRTRELAPKLGHNVTVISESGINTYAQVRELSHFADGFLIGSALMAHDDLHAAVRRVLLGENKVCGLTRGQDAKAAYDAGAIYGGLIFVATSPRCVNVEQAQEVMAAAPLQYVGVFRNHDIADVLDKAKVLSLVAVQLHGNEDQLYIDTLREALPAHVAIWKALSVGETLPARELQHVDKYVLDNGQGGSGQRFDWSLLNGQSLGNVLLAGGLGADNCVEAAQTGCAGLDFNSAVESQPGIKDARLLASVFQTLRAY</sequence>
<organism>
    <name type="scientific">Escherichia coli O157:H7</name>
    <dbReference type="NCBI Taxonomy" id="83334"/>
    <lineage>
        <taxon>Bacteria</taxon>
        <taxon>Pseudomonadati</taxon>
        <taxon>Pseudomonadota</taxon>
        <taxon>Gammaproteobacteria</taxon>
        <taxon>Enterobacterales</taxon>
        <taxon>Enterobacteriaceae</taxon>
        <taxon>Escherichia</taxon>
    </lineage>
</organism>
<proteinExistence type="inferred from homology"/>
<dbReference type="EC" id="4.1.1.48"/>
<dbReference type="EC" id="5.3.1.24"/>
<dbReference type="EMBL" id="AE005174">
    <property type="protein sequence ID" value="AAG56554.1"/>
    <property type="molecule type" value="Genomic_DNA"/>
</dbReference>
<dbReference type="EMBL" id="BA000007">
    <property type="protein sequence ID" value="BAB35257.2"/>
    <property type="status" value="ALT_INIT"/>
    <property type="molecule type" value="Genomic_DNA"/>
</dbReference>
<dbReference type="PIR" id="B90858">
    <property type="entry name" value="B90858"/>
</dbReference>
<dbReference type="PIR" id="F85761">
    <property type="entry name" value="F85761"/>
</dbReference>
<dbReference type="RefSeq" id="NP_309861.1">
    <property type="nucleotide sequence ID" value="NC_002695.1"/>
</dbReference>
<dbReference type="SMR" id="Q8X7B7"/>
<dbReference type="STRING" id="155864.Z2549"/>
<dbReference type="GeneID" id="912854"/>
<dbReference type="KEGG" id="ece:Z2549"/>
<dbReference type="KEGG" id="ecs:ECs_1834"/>
<dbReference type="PATRIC" id="fig|386585.9.peg.1933"/>
<dbReference type="eggNOG" id="COG0134">
    <property type="taxonomic scope" value="Bacteria"/>
</dbReference>
<dbReference type="eggNOG" id="COG0135">
    <property type="taxonomic scope" value="Bacteria"/>
</dbReference>
<dbReference type="HOGENOM" id="CLU_007713_0_0_6"/>
<dbReference type="UniPathway" id="UPA00035">
    <property type="reaction ID" value="UER00042"/>
</dbReference>
<dbReference type="UniPathway" id="UPA00035">
    <property type="reaction ID" value="UER00043"/>
</dbReference>
<dbReference type="Proteomes" id="UP000000558">
    <property type="component" value="Chromosome"/>
</dbReference>
<dbReference type="Proteomes" id="UP000002519">
    <property type="component" value="Chromosome"/>
</dbReference>
<dbReference type="GO" id="GO:0004425">
    <property type="term" value="F:indole-3-glycerol-phosphate synthase activity"/>
    <property type="evidence" value="ECO:0007669"/>
    <property type="project" value="UniProtKB-UniRule"/>
</dbReference>
<dbReference type="GO" id="GO:0004640">
    <property type="term" value="F:phosphoribosylanthranilate isomerase activity"/>
    <property type="evidence" value="ECO:0007669"/>
    <property type="project" value="UniProtKB-UniRule"/>
</dbReference>
<dbReference type="GO" id="GO:0000162">
    <property type="term" value="P:L-tryptophan biosynthetic process"/>
    <property type="evidence" value="ECO:0007669"/>
    <property type="project" value="UniProtKB-UniRule"/>
</dbReference>
<dbReference type="CDD" id="cd00331">
    <property type="entry name" value="IGPS"/>
    <property type="match status" value="1"/>
</dbReference>
<dbReference type="CDD" id="cd00405">
    <property type="entry name" value="PRAI"/>
    <property type="match status" value="1"/>
</dbReference>
<dbReference type="FunFam" id="3.20.20.70:FF:000024">
    <property type="entry name" value="Indole-3-glycerol phosphate synthase"/>
    <property type="match status" value="1"/>
</dbReference>
<dbReference type="FunFam" id="3.20.20.70:FF:000165">
    <property type="entry name" value="Multifunctional fusion protein"/>
    <property type="match status" value="1"/>
</dbReference>
<dbReference type="Gene3D" id="3.20.20.70">
    <property type="entry name" value="Aldolase class I"/>
    <property type="match status" value="2"/>
</dbReference>
<dbReference type="HAMAP" id="MF_00134_B">
    <property type="entry name" value="IGPS_B"/>
    <property type="match status" value="1"/>
</dbReference>
<dbReference type="HAMAP" id="MF_00135">
    <property type="entry name" value="PRAI"/>
    <property type="match status" value="1"/>
</dbReference>
<dbReference type="InterPro" id="IPR013785">
    <property type="entry name" value="Aldolase_TIM"/>
</dbReference>
<dbReference type="InterPro" id="IPR045186">
    <property type="entry name" value="Indole-3-glycerol_P_synth"/>
</dbReference>
<dbReference type="InterPro" id="IPR013798">
    <property type="entry name" value="Indole-3-glycerol_P_synth_dom"/>
</dbReference>
<dbReference type="InterPro" id="IPR001468">
    <property type="entry name" value="Indole-3-GlycerolPSynthase_CS"/>
</dbReference>
<dbReference type="InterPro" id="IPR001240">
    <property type="entry name" value="PRAI_dom"/>
</dbReference>
<dbReference type="InterPro" id="IPR011060">
    <property type="entry name" value="RibuloseP-bd_barrel"/>
</dbReference>
<dbReference type="NCBIfam" id="NF001377">
    <property type="entry name" value="PRK00278.2-4"/>
    <property type="match status" value="1"/>
</dbReference>
<dbReference type="NCBIfam" id="NF006945">
    <property type="entry name" value="PRK09427.1"/>
    <property type="match status" value="1"/>
</dbReference>
<dbReference type="PANTHER" id="PTHR22854:SF2">
    <property type="entry name" value="INDOLE-3-GLYCEROL-PHOSPHATE SYNTHASE"/>
    <property type="match status" value="1"/>
</dbReference>
<dbReference type="PANTHER" id="PTHR22854">
    <property type="entry name" value="TRYPTOPHAN BIOSYNTHESIS PROTEIN"/>
    <property type="match status" value="1"/>
</dbReference>
<dbReference type="Pfam" id="PF00218">
    <property type="entry name" value="IGPS"/>
    <property type="match status" value="1"/>
</dbReference>
<dbReference type="Pfam" id="PF00697">
    <property type="entry name" value="PRAI"/>
    <property type="match status" value="1"/>
</dbReference>
<dbReference type="SUPFAM" id="SSF51366">
    <property type="entry name" value="Ribulose-phoshate binding barrel"/>
    <property type="match status" value="2"/>
</dbReference>
<dbReference type="PROSITE" id="PS00614">
    <property type="entry name" value="IGPS"/>
    <property type="match status" value="1"/>
</dbReference>
<feature type="chain" id="PRO_0000154278" description="Tryptophan biosynthesis protein TrpCF">
    <location>
        <begin position="1"/>
        <end position="453"/>
    </location>
</feature>
<feature type="region of interest" description="Indole-3-glycerol phosphate synthase">
    <location>
        <begin position="1"/>
        <end position="257"/>
    </location>
</feature>
<feature type="region of interest" description="N-(5'-phosphoribosyl)anthranilate isomerase">
    <location>
        <begin position="258"/>
        <end position="453"/>
    </location>
</feature>
<gene>
    <name type="primary">trpC</name>
    <name type="ordered locus">Z2549</name>
    <name type="ordered locus">ECs1834</name>
</gene>
<keyword id="KW-0028">Amino-acid biosynthesis</keyword>
<keyword id="KW-0057">Aromatic amino acid biosynthesis</keyword>
<keyword id="KW-0210">Decarboxylase</keyword>
<keyword id="KW-0413">Isomerase</keyword>
<keyword id="KW-0456">Lyase</keyword>
<keyword id="KW-0511">Multifunctional enzyme</keyword>
<keyword id="KW-1185">Reference proteome</keyword>
<keyword id="KW-0822">Tryptophan biosynthesis</keyword>
<reference key="1">
    <citation type="journal article" date="2001" name="Nature">
        <title>Genome sequence of enterohaemorrhagic Escherichia coli O157:H7.</title>
        <authorList>
            <person name="Perna N.T."/>
            <person name="Plunkett G. III"/>
            <person name="Burland V."/>
            <person name="Mau B."/>
            <person name="Glasner J.D."/>
            <person name="Rose D.J."/>
            <person name="Mayhew G.F."/>
            <person name="Evans P.S."/>
            <person name="Gregor J."/>
            <person name="Kirkpatrick H.A."/>
            <person name="Posfai G."/>
            <person name="Hackett J."/>
            <person name="Klink S."/>
            <person name="Boutin A."/>
            <person name="Shao Y."/>
            <person name="Miller L."/>
            <person name="Grotbeck E.J."/>
            <person name="Davis N.W."/>
            <person name="Lim A."/>
            <person name="Dimalanta E.T."/>
            <person name="Potamousis K."/>
            <person name="Apodaca J."/>
            <person name="Anantharaman T.S."/>
            <person name="Lin J."/>
            <person name="Yen G."/>
            <person name="Schwartz D.C."/>
            <person name="Welch R.A."/>
            <person name="Blattner F.R."/>
        </authorList>
    </citation>
    <scope>NUCLEOTIDE SEQUENCE [LARGE SCALE GENOMIC DNA]</scope>
    <source>
        <strain>O157:H7 / EDL933 / ATCC 700927 / EHEC</strain>
    </source>
</reference>
<reference key="2">
    <citation type="journal article" date="2001" name="DNA Res.">
        <title>Complete genome sequence of enterohemorrhagic Escherichia coli O157:H7 and genomic comparison with a laboratory strain K-12.</title>
        <authorList>
            <person name="Hayashi T."/>
            <person name="Makino K."/>
            <person name="Ohnishi M."/>
            <person name="Kurokawa K."/>
            <person name="Ishii K."/>
            <person name="Yokoyama K."/>
            <person name="Han C.-G."/>
            <person name="Ohtsubo E."/>
            <person name="Nakayama K."/>
            <person name="Murata T."/>
            <person name="Tanaka M."/>
            <person name="Tobe T."/>
            <person name="Iida T."/>
            <person name="Takami H."/>
            <person name="Honda T."/>
            <person name="Sasakawa C."/>
            <person name="Ogasawara N."/>
            <person name="Yasunaga T."/>
            <person name="Kuhara S."/>
            <person name="Shiba T."/>
            <person name="Hattori M."/>
            <person name="Shinagawa H."/>
        </authorList>
    </citation>
    <scope>NUCLEOTIDE SEQUENCE [LARGE SCALE GENOMIC DNA]</scope>
    <source>
        <strain>O157:H7 / Sakai / RIMD 0509952 / EHEC</strain>
    </source>
</reference>
<evidence type="ECO:0000250" key="1"/>
<evidence type="ECO:0000305" key="2"/>